<name>SECB1_GLUOX</name>
<keyword id="KW-0143">Chaperone</keyword>
<keyword id="KW-0963">Cytoplasm</keyword>
<keyword id="KW-0653">Protein transport</keyword>
<keyword id="KW-1185">Reference proteome</keyword>
<keyword id="KW-0811">Translocation</keyword>
<keyword id="KW-0813">Transport</keyword>
<comment type="function">
    <text evidence="1">One of the proteins required for the normal export of preproteins out of the cell cytoplasm. It is a molecular chaperone that binds to a subset of precursor proteins, maintaining them in a translocation-competent state. It also specifically binds to its receptor SecA.</text>
</comment>
<comment type="subunit">
    <text evidence="1">Homotetramer, a dimer of dimers. One homotetramer interacts with 1 SecA dimer.</text>
</comment>
<comment type="subcellular location">
    <subcellularLocation>
        <location evidence="1">Cytoplasm</location>
    </subcellularLocation>
</comment>
<comment type="similarity">
    <text evidence="1">Belongs to the SecB family.</text>
</comment>
<sequence>MSENTTDNAALGQENVPAMPLAINLQYTKDLSFEVPAGASIFATLRSAPQISVNIDVQANRLEEDQAVYEVALAVRAEAAEPPAQEGGQAGRTVFIAELTYAAVVTLNNPPQELIEPILLVEVPRLIFPYVRSIVSDVTRDGGFPPVVLQPIDFVALWQAKRAQQFPEPAGEA</sequence>
<gene>
    <name evidence="1" type="primary">secB1</name>
    <name type="ordered locus">GOX1885</name>
</gene>
<protein>
    <recommendedName>
        <fullName evidence="1">Protein-export protein SecB 1</fullName>
    </recommendedName>
</protein>
<accession>Q5FPS3</accession>
<dbReference type="EMBL" id="CP000009">
    <property type="protein sequence ID" value="AAW61623.1"/>
    <property type="molecule type" value="Genomic_DNA"/>
</dbReference>
<dbReference type="RefSeq" id="WP_011253404.1">
    <property type="nucleotide sequence ID" value="NC_006677.1"/>
</dbReference>
<dbReference type="SMR" id="Q5FPS3"/>
<dbReference type="STRING" id="290633.GOX1885"/>
<dbReference type="KEGG" id="gox:GOX1885"/>
<dbReference type="eggNOG" id="COG1952">
    <property type="taxonomic scope" value="Bacteria"/>
</dbReference>
<dbReference type="HOGENOM" id="CLU_111574_0_0_5"/>
<dbReference type="Proteomes" id="UP000006375">
    <property type="component" value="Chromosome"/>
</dbReference>
<dbReference type="GO" id="GO:0005737">
    <property type="term" value="C:cytoplasm"/>
    <property type="evidence" value="ECO:0007669"/>
    <property type="project" value="UniProtKB-SubCell"/>
</dbReference>
<dbReference type="GO" id="GO:0051082">
    <property type="term" value="F:unfolded protein binding"/>
    <property type="evidence" value="ECO:0007669"/>
    <property type="project" value="InterPro"/>
</dbReference>
<dbReference type="GO" id="GO:0006457">
    <property type="term" value="P:protein folding"/>
    <property type="evidence" value="ECO:0007669"/>
    <property type="project" value="UniProtKB-UniRule"/>
</dbReference>
<dbReference type="GO" id="GO:0051262">
    <property type="term" value="P:protein tetramerization"/>
    <property type="evidence" value="ECO:0007669"/>
    <property type="project" value="InterPro"/>
</dbReference>
<dbReference type="GO" id="GO:0015031">
    <property type="term" value="P:protein transport"/>
    <property type="evidence" value="ECO:0007669"/>
    <property type="project" value="UniProtKB-UniRule"/>
</dbReference>
<dbReference type="Gene3D" id="3.10.420.10">
    <property type="entry name" value="SecB-like"/>
    <property type="match status" value="1"/>
</dbReference>
<dbReference type="HAMAP" id="MF_00821">
    <property type="entry name" value="SecB"/>
    <property type="match status" value="1"/>
</dbReference>
<dbReference type="InterPro" id="IPR003708">
    <property type="entry name" value="SecB"/>
</dbReference>
<dbReference type="InterPro" id="IPR035958">
    <property type="entry name" value="SecB-like_sf"/>
</dbReference>
<dbReference type="NCBIfam" id="NF004392">
    <property type="entry name" value="PRK05751.1-3"/>
    <property type="match status" value="1"/>
</dbReference>
<dbReference type="NCBIfam" id="TIGR00809">
    <property type="entry name" value="secB"/>
    <property type="match status" value="1"/>
</dbReference>
<dbReference type="PANTHER" id="PTHR36918">
    <property type="match status" value="1"/>
</dbReference>
<dbReference type="PANTHER" id="PTHR36918:SF1">
    <property type="entry name" value="PROTEIN-EXPORT PROTEIN SECB"/>
    <property type="match status" value="1"/>
</dbReference>
<dbReference type="Pfam" id="PF02556">
    <property type="entry name" value="SecB"/>
    <property type="match status" value="1"/>
</dbReference>
<dbReference type="PRINTS" id="PR01594">
    <property type="entry name" value="SECBCHAPRONE"/>
</dbReference>
<dbReference type="SUPFAM" id="SSF54611">
    <property type="entry name" value="SecB-like"/>
    <property type="match status" value="1"/>
</dbReference>
<evidence type="ECO:0000255" key="1">
    <source>
        <dbReference type="HAMAP-Rule" id="MF_00821"/>
    </source>
</evidence>
<reference key="1">
    <citation type="journal article" date="2005" name="Nat. Biotechnol.">
        <title>Complete genome sequence of the acetic acid bacterium Gluconobacter oxydans.</title>
        <authorList>
            <person name="Prust C."/>
            <person name="Hoffmeister M."/>
            <person name="Liesegang H."/>
            <person name="Wiezer A."/>
            <person name="Fricke W.F."/>
            <person name="Ehrenreich A."/>
            <person name="Gottschalk G."/>
            <person name="Deppenmeier U."/>
        </authorList>
    </citation>
    <scope>NUCLEOTIDE SEQUENCE [LARGE SCALE GENOMIC DNA]</scope>
    <source>
        <strain>621H</strain>
    </source>
</reference>
<organism>
    <name type="scientific">Gluconobacter oxydans (strain 621H)</name>
    <name type="common">Gluconobacter suboxydans</name>
    <dbReference type="NCBI Taxonomy" id="290633"/>
    <lineage>
        <taxon>Bacteria</taxon>
        <taxon>Pseudomonadati</taxon>
        <taxon>Pseudomonadota</taxon>
        <taxon>Alphaproteobacteria</taxon>
        <taxon>Acetobacterales</taxon>
        <taxon>Acetobacteraceae</taxon>
        <taxon>Gluconobacter</taxon>
    </lineage>
</organism>
<feature type="chain" id="PRO_0000055375" description="Protein-export protein SecB 1">
    <location>
        <begin position="1"/>
        <end position="173"/>
    </location>
</feature>
<proteinExistence type="inferred from homology"/>